<name>PYRC_SHEB9</name>
<organism>
    <name type="scientific">Shewanella baltica (strain OS195)</name>
    <dbReference type="NCBI Taxonomy" id="399599"/>
    <lineage>
        <taxon>Bacteria</taxon>
        <taxon>Pseudomonadati</taxon>
        <taxon>Pseudomonadota</taxon>
        <taxon>Gammaproteobacteria</taxon>
        <taxon>Alteromonadales</taxon>
        <taxon>Shewanellaceae</taxon>
        <taxon>Shewanella</taxon>
    </lineage>
</organism>
<reference key="1">
    <citation type="submission" date="2007-11" db="EMBL/GenBank/DDBJ databases">
        <title>Complete sequence of chromosome of Shewanella baltica OS195.</title>
        <authorList>
            <consortium name="US DOE Joint Genome Institute"/>
            <person name="Copeland A."/>
            <person name="Lucas S."/>
            <person name="Lapidus A."/>
            <person name="Barry K."/>
            <person name="Glavina del Rio T."/>
            <person name="Dalin E."/>
            <person name="Tice H."/>
            <person name="Pitluck S."/>
            <person name="Chain P."/>
            <person name="Malfatti S."/>
            <person name="Shin M."/>
            <person name="Vergez L."/>
            <person name="Schmutz J."/>
            <person name="Larimer F."/>
            <person name="Land M."/>
            <person name="Hauser L."/>
            <person name="Kyrpides N."/>
            <person name="Kim E."/>
            <person name="Brettar I."/>
            <person name="Rodrigues J."/>
            <person name="Konstantinidis K."/>
            <person name="Klappenbach J."/>
            <person name="Hofle M."/>
            <person name="Tiedje J."/>
            <person name="Richardson P."/>
        </authorList>
    </citation>
    <scope>NUCLEOTIDE SEQUENCE [LARGE SCALE GENOMIC DNA]</scope>
    <source>
        <strain>OS195</strain>
    </source>
</reference>
<proteinExistence type="inferred from homology"/>
<keyword id="KW-0378">Hydrolase</keyword>
<keyword id="KW-0479">Metal-binding</keyword>
<keyword id="KW-0665">Pyrimidine biosynthesis</keyword>
<keyword id="KW-0862">Zinc</keyword>
<dbReference type="EC" id="3.5.2.3" evidence="1"/>
<dbReference type="EMBL" id="CP000891">
    <property type="protein sequence ID" value="ABX48204.1"/>
    <property type="molecule type" value="Genomic_DNA"/>
</dbReference>
<dbReference type="RefSeq" id="WP_006085865.1">
    <property type="nucleotide sequence ID" value="NC_009997.1"/>
</dbReference>
<dbReference type="SMR" id="A9L3F5"/>
<dbReference type="GeneID" id="11771318"/>
<dbReference type="KEGG" id="sbn:Sbal195_1028"/>
<dbReference type="HOGENOM" id="CLU_041558_1_0_6"/>
<dbReference type="UniPathway" id="UPA00070">
    <property type="reaction ID" value="UER00117"/>
</dbReference>
<dbReference type="Proteomes" id="UP000000770">
    <property type="component" value="Chromosome"/>
</dbReference>
<dbReference type="GO" id="GO:0005829">
    <property type="term" value="C:cytosol"/>
    <property type="evidence" value="ECO:0007669"/>
    <property type="project" value="TreeGrafter"/>
</dbReference>
<dbReference type="GO" id="GO:0004151">
    <property type="term" value="F:dihydroorotase activity"/>
    <property type="evidence" value="ECO:0007669"/>
    <property type="project" value="UniProtKB-UniRule"/>
</dbReference>
<dbReference type="GO" id="GO:0008270">
    <property type="term" value="F:zinc ion binding"/>
    <property type="evidence" value="ECO:0007669"/>
    <property type="project" value="UniProtKB-UniRule"/>
</dbReference>
<dbReference type="GO" id="GO:0006207">
    <property type="term" value="P:'de novo' pyrimidine nucleobase biosynthetic process"/>
    <property type="evidence" value="ECO:0007669"/>
    <property type="project" value="TreeGrafter"/>
</dbReference>
<dbReference type="GO" id="GO:0044205">
    <property type="term" value="P:'de novo' UMP biosynthetic process"/>
    <property type="evidence" value="ECO:0007669"/>
    <property type="project" value="UniProtKB-UniRule"/>
</dbReference>
<dbReference type="CDD" id="cd01294">
    <property type="entry name" value="DHOase"/>
    <property type="match status" value="1"/>
</dbReference>
<dbReference type="FunFam" id="3.20.20.140:FF:000006">
    <property type="entry name" value="Dihydroorotase"/>
    <property type="match status" value="1"/>
</dbReference>
<dbReference type="Gene3D" id="3.20.20.140">
    <property type="entry name" value="Metal-dependent hydrolases"/>
    <property type="match status" value="1"/>
</dbReference>
<dbReference type="HAMAP" id="MF_00219">
    <property type="entry name" value="PyrC_classII"/>
    <property type="match status" value="1"/>
</dbReference>
<dbReference type="InterPro" id="IPR006680">
    <property type="entry name" value="Amidohydro-rel"/>
</dbReference>
<dbReference type="InterPro" id="IPR004721">
    <property type="entry name" value="DHOdimr"/>
</dbReference>
<dbReference type="InterPro" id="IPR002195">
    <property type="entry name" value="Dihydroorotase_CS"/>
</dbReference>
<dbReference type="InterPro" id="IPR032466">
    <property type="entry name" value="Metal_Hydrolase"/>
</dbReference>
<dbReference type="NCBIfam" id="TIGR00856">
    <property type="entry name" value="pyrC_dimer"/>
    <property type="match status" value="1"/>
</dbReference>
<dbReference type="PANTHER" id="PTHR43137">
    <property type="entry name" value="DIHYDROOROTASE"/>
    <property type="match status" value="1"/>
</dbReference>
<dbReference type="PANTHER" id="PTHR43137:SF1">
    <property type="entry name" value="DIHYDROOROTASE"/>
    <property type="match status" value="1"/>
</dbReference>
<dbReference type="Pfam" id="PF01979">
    <property type="entry name" value="Amidohydro_1"/>
    <property type="match status" value="1"/>
</dbReference>
<dbReference type="PIRSF" id="PIRSF001237">
    <property type="entry name" value="DHOdimr"/>
    <property type="match status" value="1"/>
</dbReference>
<dbReference type="SUPFAM" id="SSF51556">
    <property type="entry name" value="Metallo-dependent hydrolases"/>
    <property type="match status" value="1"/>
</dbReference>
<dbReference type="PROSITE" id="PS00482">
    <property type="entry name" value="DIHYDROOROTASE_1"/>
    <property type="match status" value="1"/>
</dbReference>
<dbReference type="PROSITE" id="PS00483">
    <property type="entry name" value="DIHYDROOROTASE_2"/>
    <property type="match status" value="1"/>
</dbReference>
<gene>
    <name evidence="1" type="primary">pyrC</name>
    <name type="ordered locus">Sbal195_1028</name>
</gene>
<comment type="function">
    <text evidence="1">Catalyzes the reversible cyclization of carbamoyl aspartate to dihydroorotate.</text>
</comment>
<comment type="catalytic activity">
    <reaction evidence="1">
        <text>(S)-dihydroorotate + H2O = N-carbamoyl-L-aspartate + H(+)</text>
        <dbReference type="Rhea" id="RHEA:24296"/>
        <dbReference type="ChEBI" id="CHEBI:15377"/>
        <dbReference type="ChEBI" id="CHEBI:15378"/>
        <dbReference type="ChEBI" id="CHEBI:30864"/>
        <dbReference type="ChEBI" id="CHEBI:32814"/>
        <dbReference type="EC" id="3.5.2.3"/>
    </reaction>
</comment>
<comment type="cofactor">
    <cofactor evidence="1">
        <name>Zn(2+)</name>
        <dbReference type="ChEBI" id="CHEBI:29105"/>
    </cofactor>
    <text evidence="1">Binds 2 Zn(2+) ions per subunit.</text>
</comment>
<comment type="pathway">
    <text evidence="1">Pyrimidine metabolism; UMP biosynthesis via de novo pathway; (S)-dihydroorotate from bicarbonate: step 3/3.</text>
</comment>
<comment type="subunit">
    <text evidence="1">Homodimer.</text>
</comment>
<comment type="similarity">
    <text evidence="1">Belongs to the metallo-dependent hydrolases superfamily. DHOase family. Class II DHOase subfamily.</text>
</comment>
<feature type="chain" id="PRO_1000078103" description="Dihydroorotase">
    <location>
        <begin position="1"/>
        <end position="343"/>
    </location>
</feature>
<feature type="active site" evidence="1">
    <location>
        <position position="247"/>
    </location>
</feature>
<feature type="binding site" evidence="1">
    <location>
        <position position="13"/>
    </location>
    <ligand>
        <name>Zn(2+)</name>
        <dbReference type="ChEBI" id="CHEBI:29105"/>
        <label>1</label>
    </ligand>
</feature>
<feature type="binding site" evidence="1">
    <location>
        <begin position="15"/>
        <end position="17"/>
    </location>
    <ligand>
        <name>substrate</name>
    </ligand>
</feature>
<feature type="binding site" evidence="1">
    <location>
        <position position="15"/>
    </location>
    <ligand>
        <name>Zn(2+)</name>
        <dbReference type="ChEBI" id="CHEBI:29105"/>
        <label>1</label>
    </ligand>
</feature>
<feature type="binding site" evidence="1">
    <location>
        <position position="41"/>
    </location>
    <ligand>
        <name>substrate</name>
    </ligand>
</feature>
<feature type="binding site" description="via carbamate group" evidence="1">
    <location>
        <position position="99"/>
    </location>
    <ligand>
        <name>Zn(2+)</name>
        <dbReference type="ChEBI" id="CHEBI:29105"/>
        <label>1</label>
    </ligand>
</feature>
<feature type="binding site" description="via carbamate group" evidence="1">
    <location>
        <position position="99"/>
    </location>
    <ligand>
        <name>Zn(2+)</name>
        <dbReference type="ChEBI" id="CHEBI:29105"/>
        <label>2</label>
    </ligand>
</feature>
<feature type="binding site" evidence="1">
    <location>
        <position position="136"/>
    </location>
    <ligand>
        <name>substrate</name>
    </ligand>
</feature>
<feature type="binding site" evidence="1">
    <location>
        <position position="136"/>
    </location>
    <ligand>
        <name>Zn(2+)</name>
        <dbReference type="ChEBI" id="CHEBI:29105"/>
        <label>2</label>
    </ligand>
</feature>
<feature type="binding site" evidence="1">
    <location>
        <position position="174"/>
    </location>
    <ligand>
        <name>Zn(2+)</name>
        <dbReference type="ChEBI" id="CHEBI:29105"/>
        <label>2</label>
    </ligand>
</feature>
<feature type="binding site" evidence="1">
    <location>
        <position position="219"/>
    </location>
    <ligand>
        <name>substrate</name>
    </ligand>
</feature>
<feature type="binding site" evidence="1">
    <location>
        <position position="247"/>
    </location>
    <ligand>
        <name>Zn(2+)</name>
        <dbReference type="ChEBI" id="CHEBI:29105"/>
        <label>1</label>
    </ligand>
</feature>
<feature type="binding site" evidence="1">
    <location>
        <position position="251"/>
    </location>
    <ligand>
        <name>substrate</name>
    </ligand>
</feature>
<feature type="binding site" evidence="1">
    <location>
        <position position="263"/>
    </location>
    <ligand>
        <name>substrate</name>
    </ligand>
</feature>
<feature type="modified residue" description="N6-carboxylysine" evidence="1">
    <location>
        <position position="99"/>
    </location>
</feature>
<protein>
    <recommendedName>
        <fullName evidence="1">Dihydroorotase</fullName>
        <shortName evidence="1">DHOase</shortName>
        <ecNumber evidence="1">3.5.2.3</ecNumber>
    </recommendedName>
</protein>
<accession>A9L3F5</accession>
<sequence>MTTITITRPDDWHIHLRDGAQLKDTVRDISRYMGRAIVMPNLVPPAIDTETALTYYDRIKAQVPAGSQFEPLMVLYLTDKTSPDEIRRAKASGKIVAAKLYPAGATTNSDSGVTDLKNIYPALEAMQEVGMLFLVHGEVTDSSIDIFDRERVFIENILSKIVADFPELKIVLEHITTKDAVDFVTQASDNVAATITAHHLLYNRNHMLAGGIRPHFYCLPILKRNTHQQALLAAAASGSKKFFLGTDSAPHAKDKKEAACGCAGSYTAHAAIELYAEAFESVNALDKLEAFASFNGPDFYNLPRNADTITLVKKPWNVPATYPLGDTNVVPIRAGEAIDWQVE</sequence>
<evidence type="ECO:0000255" key="1">
    <source>
        <dbReference type="HAMAP-Rule" id="MF_00219"/>
    </source>
</evidence>